<evidence type="ECO:0000250" key="1">
    <source>
        <dbReference type="UniProtKB" id="O35077"/>
    </source>
</evidence>
<evidence type="ECO:0000250" key="2">
    <source>
        <dbReference type="UniProtKB" id="P13707"/>
    </source>
</evidence>
<evidence type="ECO:0000269" key="3">
    <source>
    </source>
</evidence>
<evidence type="ECO:0000269" key="4">
    <source>
    </source>
</evidence>
<evidence type="ECO:0000269" key="5">
    <source>
    </source>
</evidence>
<evidence type="ECO:0000269" key="6">
    <source>
    </source>
</evidence>
<evidence type="ECO:0000303" key="7">
    <source>
    </source>
</evidence>
<evidence type="ECO:0000305" key="8"/>
<evidence type="ECO:0000305" key="9">
    <source>
    </source>
</evidence>
<evidence type="ECO:0000312" key="10">
    <source>
        <dbReference type="HGNC" id="HGNC:4455"/>
    </source>
</evidence>
<evidence type="ECO:0007744" key="11">
    <source>
        <dbReference type="PDB" id="6E8Y"/>
    </source>
</evidence>
<evidence type="ECO:0007744" key="12">
    <source>
        <dbReference type="PDB" id="6E8Z"/>
    </source>
</evidence>
<evidence type="ECO:0007744" key="13">
    <source>
    </source>
</evidence>
<evidence type="ECO:0007829" key="14">
    <source>
        <dbReference type="PDB" id="1X0V"/>
    </source>
</evidence>
<evidence type="ECO:0007829" key="15">
    <source>
        <dbReference type="PDB" id="6E8Y"/>
    </source>
</evidence>
<organism>
    <name type="scientific">Homo sapiens</name>
    <name type="common">Human</name>
    <dbReference type="NCBI Taxonomy" id="9606"/>
    <lineage>
        <taxon>Eukaryota</taxon>
        <taxon>Metazoa</taxon>
        <taxon>Chordata</taxon>
        <taxon>Craniata</taxon>
        <taxon>Vertebrata</taxon>
        <taxon>Euteleostomi</taxon>
        <taxon>Mammalia</taxon>
        <taxon>Eutheria</taxon>
        <taxon>Euarchontoglires</taxon>
        <taxon>Primates</taxon>
        <taxon>Haplorrhini</taxon>
        <taxon>Catarrhini</taxon>
        <taxon>Hominidae</taxon>
        <taxon>Homo</taxon>
    </lineage>
</organism>
<gene>
    <name evidence="10" type="primary">GPD1</name>
</gene>
<name>GPDA_HUMAN</name>
<sequence>MASKKVCIVGSGNWGSAIAKIVGGNAAQLAQFDPRVTMWVFEEDIGGKKLTEIINTQHENVKYLPGHKLPPNVVAVPDVVQAAEDADILIFVVPHQFIGKICDQLKGHLKANATGISLIKGVDEGPNGLKLISEVIGERLGIPMSVLMGANIASEVADEKFCETTIGCKDPAQGQLLKELMQTPNFRITVVQEVDTVEICGALKNVVAVGAGFCDGLGFGDNTKAAVIRLGLMEMIAFAKLFCSGPVSSATFLESCGVADLITTCYGGRNRKVAEAFARTGKSIEQLEKELLNGQKLQGPETARELYSILQHKGLVDKFPLFMAVYKVCYEGQPVGEFIHCLQNHPEHM</sequence>
<dbReference type="EC" id="1.1.1.8" evidence="6"/>
<dbReference type="EMBL" id="L34041">
    <property type="protein sequence ID" value="AAA92863.1"/>
    <property type="molecule type" value="mRNA"/>
</dbReference>
<dbReference type="EMBL" id="AK130162">
    <property type="status" value="NOT_ANNOTATED_CDS"/>
    <property type="molecule type" value="mRNA"/>
</dbReference>
<dbReference type="EMBL" id="AC025154">
    <property type="status" value="NOT_ANNOTATED_CDS"/>
    <property type="molecule type" value="Genomic_DNA"/>
</dbReference>
<dbReference type="EMBL" id="BC032234">
    <property type="protein sequence ID" value="AAH32234.1"/>
    <property type="molecule type" value="mRNA"/>
</dbReference>
<dbReference type="EMBL" id="M36917">
    <property type="protein sequence ID" value="AAA35925.1"/>
    <property type="molecule type" value="Genomic_DNA"/>
</dbReference>
<dbReference type="CCDS" id="CCDS58229.1">
    <molecule id="P21695-2"/>
</dbReference>
<dbReference type="CCDS" id="CCDS8799.1">
    <molecule id="P21695-1"/>
</dbReference>
<dbReference type="PIR" id="S55920">
    <property type="entry name" value="S55920"/>
</dbReference>
<dbReference type="RefSeq" id="NP_001244128.1">
    <molecule id="P21695-2"/>
    <property type="nucleotide sequence ID" value="NM_001257199.2"/>
</dbReference>
<dbReference type="RefSeq" id="NP_005267.2">
    <molecule id="P21695-1"/>
    <property type="nucleotide sequence ID" value="NM_005276.3"/>
</dbReference>
<dbReference type="PDB" id="1WPQ">
    <property type="method" value="X-ray"/>
    <property type="resolution" value="2.50 A"/>
    <property type="chains" value="A/B=1-349"/>
</dbReference>
<dbReference type="PDB" id="1X0V">
    <property type="method" value="X-ray"/>
    <property type="resolution" value="2.30 A"/>
    <property type="chains" value="A/B=1-349"/>
</dbReference>
<dbReference type="PDB" id="1X0X">
    <property type="method" value="X-ray"/>
    <property type="resolution" value="2.75 A"/>
    <property type="chains" value="A=1-349"/>
</dbReference>
<dbReference type="PDB" id="6E8Y">
    <property type="method" value="X-ray"/>
    <property type="resolution" value="1.85 A"/>
    <property type="chains" value="A/B=1-349"/>
</dbReference>
<dbReference type="PDB" id="6E8Z">
    <property type="method" value="X-ray"/>
    <property type="resolution" value="2.10 A"/>
    <property type="chains" value="A/B=1-349"/>
</dbReference>
<dbReference type="PDB" id="6E90">
    <property type="method" value="X-ray"/>
    <property type="resolution" value="2.05 A"/>
    <property type="chains" value="A/B/C/D=1-349"/>
</dbReference>
<dbReference type="PDB" id="6PYP">
    <property type="method" value="X-ray"/>
    <property type="resolution" value="1.95 A"/>
    <property type="chains" value="A/B=1-349"/>
</dbReference>
<dbReference type="PDBsum" id="1WPQ"/>
<dbReference type="PDBsum" id="1X0V"/>
<dbReference type="PDBsum" id="1X0X"/>
<dbReference type="PDBsum" id="6E8Y"/>
<dbReference type="PDBsum" id="6E8Z"/>
<dbReference type="PDBsum" id="6E90"/>
<dbReference type="PDBsum" id="6PYP"/>
<dbReference type="SMR" id="P21695"/>
<dbReference type="BioGRID" id="109080">
    <property type="interactions" value="23"/>
</dbReference>
<dbReference type="FunCoup" id="P21695">
    <property type="interactions" value="738"/>
</dbReference>
<dbReference type="IntAct" id="P21695">
    <property type="interactions" value="12"/>
</dbReference>
<dbReference type="STRING" id="9606.ENSP00000301149"/>
<dbReference type="DrugBank" id="DB00331">
    <property type="generic name" value="Metformin"/>
</dbReference>
<dbReference type="DrugBank" id="DB00157">
    <property type="generic name" value="NADH"/>
</dbReference>
<dbReference type="SwissLipids" id="SLP:000000645"/>
<dbReference type="iPTMnet" id="P21695"/>
<dbReference type="PhosphoSitePlus" id="P21695"/>
<dbReference type="SwissPalm" id="P21695"/>
<dbReference type="BioMuta" id="GPD1"/>
<dbReference type="DMDM" id="134047785"/>
<dbReference type="jPOST" id="P21695"/>
<dbReference type="MassIVE" id="P21695"/>
<dbReference type="PaxDb" id="9606-ENSP00000301149"/>
<dbReference type="PeptideAtlas" id="P21695"/>
<dbReference type="ProteomicsDB" id="29645"/>
<dbReference type="ProteomicsDB" id="53890">
    <molecule id="P21695-1"/>
</dbReference>
<dbReference type="Antibodypedia" id="26155">
    <property type="antibodies" value="339 antibodies from 33 providers"/>
</dbReference>
<dbReference type="DNASU" id="2819"/>
<dbReference type="Ensembl" id="ENST00000301149.8">
    <molecule id="P21695-1"/>
    <property type="protein sequence ID" value="ENSP00000301149.3"/>
    <property type="gene ID" value="ENSG00000167588.13"/>
</dbReference>
<dbReference type="Ensembl" id="ENST00000548814.1">
    <molecule id="P21695-2"/>
    <property type="protein sequence ID" value="ENSP00000446768.1"/>
    <property type="gene ID" value="ENSG00000167588.13"/>
</dbReference>
<dbReference type="GeneID" id="2819"/>
<dbReference type="KEGG" id="hsa:2819"/>
<dbReference type="MANE-Select" id="ENST00000301149.8">
    <property type="protein sequence ID" value="ENSP00000301149.3"/>
    <property type="RefSeq nucleotide sequence ID" value="NM_005276.4"/>
    <property type="RefSeq protein sequence ID" value="NP_005267.2"/>
</dbReference>
<dbReference type="UCSC" id="uc001rvz.5">
    <molecule id="P21695-1"/>
    <property type="organism name" value="human"/>
</dbReference>
<dbReference type="AGR" id="HGNC:4455"/>
<dbReference type="CTD" id="2819"/>
<dbReference type="DisGeNET" id="2819"/>
<dbReference type="GeneCards" id="GPD1"/>
<dbReference type="HGNC" id="HGNC:4455">
    <property type="gene designation" value="GPD1"/>
</dbReference>
<dbReference type="HPA" id="ENSG00000167588">
    <property type="expression patterns" value="Tissue enhanced (adipose tissue, skeletal muscle)"/>
</dbReference>
<dbReference type="MalaCards" id="GPD1"/>
<dbReference type="MIM" id="138420">
    <property type="type" value="gene"/>
</dbReference>
<dbReference type="MIM" id="614480">
    <property type="type" value="phenotype"/>
</dbReference>
<dbReference type="neXtProt" id="NX_P21695"/>
<dbReference type="OpenTargets" id="ENSG00000167588"/>
<dbReference type="Orphanet" id="300293">
    <property type="disease" value="Transient infantile hypertriglyceridemia and hepatosteatosis"/>
</dbReference>
<dbReference type="PharmGKB" id="PA28836"/>
<dbReference type="VEuPathDB" id="HostDB:ENSG00000167588"/>
<dbReference type="eggNOG" id="KOG2711">
    <property type="taxonomic scope" value="Eukaryota"/>
</dbReference>
<dbReference type="GeneTree" id="ENSGT00390000003114"/>
<dbReference type="HOGENOM" id="CLU_033449_2_2_1"/>
<dbReference type="InParanoid" id="P21695"/>
<dbReference type="OMA" id="NRMFGNM"/>
<dbReference type="OrthoDB" id="10263760at2759"/>
<dbReference type="PAN-GO" id="P21695">
    <property type="GO annotations" value="4 GO annotations based on evolutionary models"/>
</dbReference>
<dbReference type="PhylomeDB" id="P21695"/>
<dbReference type="TreeFam" id="TF300836"/>
<dbReference type="BioCyc" id="MetaCyc:HS09586-MONOMER"/>
<dbReference type="BRENDA" id="1.1.1.8">
    <property type="organism ID" value="2681"/>
</dbReference>
<dbReference type="PathwayCommons" id="P21695"/>
<dbReference type="Reactome" id="R-HSA-1483166">
    <property type="pathway name" value="Synthesis of PA"/>
</dbReference>
<dbReference type="SABIO-RK" id="P21695"/>
<dbReference type="SignaLink" id="P21695"/>
<dbReference type="BioGRID-ORCS" id="2819">
    <property type="hits" value="15 hits in 1155 CRISPR screens"/>
</dbReference>
<dbReference type="ChiTaRS" id="GPD1">
    <property type="organism name" value="human"/>
</dbReference>
<dbReference type="EvolutionaryTrace" id="P21695"/>
<dbReference type="GenomeRNAi" id="2819"/>
<dbReference type="Pharos" id="P21695">
    <property type="development level" value="Tbio"/>
</dbReference>
<dbReference type="PRO" id="PR:P21695"/>
<dbReference type="Proteomes" id="UP000005640">
    <property type="component" value="Chromosome 12"/>
</dbReference>
<dbReference type="RNAct" id="P21695">
    <property type="molecule type" value="protein"/>
</dbReference>
<dbReference type="Bgee" id="ENSG00000167588">
    <property type="expression patterns" value="Expressed in subcutaneous adipose tissue and 151 other cell types or tissues"/>
</dbReference>
<dbReference type="ExpressionAtlas" id="P21695">
    <property type="expression patterns" value="baseline and differential"/>
</dbReference>
<dbReference type="GO" id="GO:0005829">
    <property type="term" value="C:cytosol"/>
    <property type="evidence" value="ECO:0000318"/>
    <property type="project" value="GO_Central"/>
</dbReference>
<dbReference type="GO" id="GO:0070062">
    <property type="term" value="C:extracellular exosome"/>
    <property type="evidence" value="ECO:0007005"/>
    <property type="project" value="UniProtKB"/>
</dbReference>
<dbReference type="GO" id="GO:0141152">
    <property type="term" value="F:glycerol-3-phosphate dehydrogenase (NAD+) activity"/>
    <property type="evidence" value="ECO:0000304"/>
    <property type="project" value="UniProtKB"/>
</dbReference>
<dbReference type="GO" id="GO:0051287">
    <property type="term" value="F:NAD binding"/>
    <property type="evidence" value="ECO:0007669"/>
    <property type="project" value="InterPro"/>
</dbReference>
<dbReference type="GO" id="GO:0042803">
    <property type="term" value="F:protein homodimerization activity"/>
    <property type="evidence" value="ECO:0007669"/>
    <property type="project" value="InterPro"/>
</dbReference>
<dbReference type="GO" id="GO:0071320">
    <property type="term" value="P:cellular response to cAMP"/>
    <property type="evidence" value="ECO:0007669"/>
    <property type="project" value="Ensembl"/>
</dbReference>
<dbReference type="GO" id="GO:0071356">
    <property type="term" value="P:cellular response to tumor necrosis factor"/>
    <property type="evidence" value="ECO:0007669"/>
    <property type="project" value="Ensembl"/>
</dbReference>
<dbReference type="GO" id="GO:0006094">
    <property type="term" value="P:gluconeogenesis"/>
    <property type="evidence" value="ECO:0007669"/>
    <property type="project" value="Ensembl"/>
</dbReference>
<dbReference type="GO" id="GO:0046168">
    <property type="term" value="P:glycerol-3-phosphate catabolic process"/>
    <property type="evidence" value="ECO:0007669"/>
    <property type="project" value="InterPro"/>
</dbReference>
<dbReference type="GO" id="GO:0006072">
    <property type="term" value="P:glycerol-3-phosphate metabolic process"/>
    <property type="evidence" value="ECO:0000318"/>
    <property type="project" value="GO_Central"/>
</dbReference>
<dbReference type="GO" id="GO:0006127">
    <property type="term" value="P:glycerol-3-phosphate shuttle"/>
    <property type="evidence" value="ECO:0007669"/>
    <property type="project" value="Ensembl"/>
</dbReference>
<dbReference type="GO" id="GO:0045821">
    <property type="term" value="P:positive regulation of glycolytic process"/>
    <property type="evidence" value="ECO:0007669"/>
    <property type="project" value="Ensembl"/>
</dbReference>
<dbReference type="FunFam" id="3.40.50.720:FF:000088">
    <property type="entry name" value="Glycerol-3-phosphate dehydrogenase [NAD(+)]"/>
    <property type="match status" value="1"/>
</dbReference>
<dbReference type="FunFam" id="1.10.1040.10:FF:000084">
    <property type="entry name" value="Glycerol-3-phosphate dehydrogenase [NAD(+)], cytoplasmic"/>
    <property type="match status" value="1"/>
</dbReference>
<dbReference type="Gene3D" id="1.10.1040.10">
    <property type="entry name" value="N-(1-d-carboxylethyl)-l-norvaline Dehydrogenase, domain 2"/>
    <property type="match status" value="1"/>
</dbReference>
<dbReference type="Gene3D" id="3.40.50.720">
    <property type="entry name" value="NAD(P)-binding Rossmann-like Domain"/>
    <property type="match status" value="1"/>
</dbReference>
<dbReference type="InterPro" id="IPR008927">
    <property type="entry name" value="6-PGluconate_DH-like_C_sf"/>
</dbReference>
<dbReference type="InterPro" id="IPR013328">
    <property type="entry name" value="6PGD_dom2"/>
</dbReference>
<dbReference type="InterPro" id="IPR006168">
    <property type="entry name" value="G3P_DH_NAD-dep"/>
</dbReference>
<dbReference type="InterPro" id="IPR006109">
    <property type="entry name" value="G3P_DH_NAD-dep_C"/>
</dbReference>
<dbReference type="InterPro" id="IPR017751">
    <property type="entry name" value="G3P_DH_NAD-dep_euk"/>
</dbReference>
<dbReference type="InterPro" id="IPR011128">
    <property type="entry name" value="G3P_DH_NAD-dep_N"/>
</dbReference>
<dbReference type="InterPro" id="IPR036291">
    <property type="entry name" value="NAD(P)-bd_dom_sf"/>
</dbReference>
<dbReference type="NCBIfam" id="TIGR03376">
    <property type="entry name" value="glycerol3P_DH"/>
    <property type="match status" value="1"/>
</dbReference>
<dbReference type="PANTHER" id="PTHR11728">
    <property type="entry name" value="GLYCEROL-3-PHOSPHATE DEHYDROGENASE"/>
    <property type="match status" value="1"/>
</dbReference>
<dbReference type="PANTHER" id="PTHR11728:SF32">
    <property type="entry name" value="GLYCEROL-3-PHOSPHATE DEHYDROGENASE [NAD(+)], CYTOPLASMIC"/>
    <property type="match status" value="1"/>
</dbReference>
<dbReference type="Pfam" id="PF07479">
    <property type="entry name" value="NAD_Gly3P_dh_C"/>
    <property type="match status" value="1"/>
</dbReference>
<dbReference type="Pfam" id="PF01210">
    <property type="entry name" value="NAD_Gly3P_dh_N"/>
    <property type="match status" value="1"/>
</dbReference>
<dbReference type="PIRSF" id="PIRSF000114">
    <property type="entry name" value="Glycerol-3-P_dh"/>
    <property type="match status" value="1"/>
</dbReference>
<dbReference type="PRINTS" id="PR00077">
    <property type="entry name" value="GPDHDRGNASE"/>
</dbReference>
<dbReference type="SUPFAM" id="SSF48179">
    <property type="entry name" value="6-phosphogluconate dehydrogenase C-terminal domain-like"/>
    <property type="match status" value="1"/>
</dbReference>
<dbReference type="SUPFAM" id="SSF51735">
    <property type="entry name" value="NAD(P)-binding Rossmann-fold domains"/>
    <property type="match status" value="1"/>
</dbReference>
<dbReference type="PROSITE" id="PS00957">
    <property type="entry name" value="NAD_G3PDH"/>
    <property type="match status" value="1"/>
</dbReference>
<feature type="chain" id="PRO_0000138079" description="Glycerol-3-phosphate dehydrogenase [NAD(+)], cytoplasmic">
    <location>
        <begin position="1"/>
        <end position="349"/>
    </location>
</feature>
<feature type="active site" description="Proton acceptor" evidence="8">
    <location>
        <position position="204"/>
    </location>
</feature>
<feature type="binding site" evidence="3">
    <location>
        <begin position="10"/>
        <end position="15"/>
    </location>
    <ligand>
        <name>NAD(+)</name>
        <dbReference type="ChEBI" id="CHEBI:57540"/>
    </ligand>
</feature>
<feature type="binding site" evidence="3">
    <location>
        <position position="41"/>
    </location>
    <ligand>
        <name>NAD(+)</name>
        <dbReference type="ChEBI" id="CHEBI:57540"/>
    </ligand>
</feature>
<feature type="binding site" evidence="3">
    <location>
        <position position="97"/>
    </location>
    <ligand>
        <name>NAD(+)</name>
        <dbReference type="ChEBI" id="CHEBI:57540"/>
    </ligand>
</feature>
<feature type="binding site">
    <location>
        <position position="120"/>
    </location>
    <ligand>
        <name>substrate</name>
    </ligand>
</feature>
<feature type="binding site" evidence="3">
    <location>
        <position position="153"/>
    </location>
    <ligand>
        <name>NAD(+)</name>
        <dbReference type="ChEBI" id="CHEBI:57540"/>
    </ligand>
</feature>
<feature type="binding site">
    <location>
        <begin position="269"/>
        <end position="270"/>
    </location>
    <ligand>
        <name>substrate</name>
    </ligand>
</feature>
<feature type="binding site" evidence="3">
    <location>
        <position position="269"/>
    </location>
    <ligand>
        <name>NAD(+)</name>
        <dbReference type="ChEBI" id="CHEBI:57540"/>
    </ligand>
</feature>
<feature type="binding site" evidence="3">
    <location>
        <position position="296"/>
    </location>
    <ligand>
        <name>NAD(+)</name>
        <dbReference type="ChEBI" id="CHEBI:57540"/>
    </ligand>
</feature>
<feature type="binding site" evidence="3">
    <location>
        <position position="298"/>
    </location>
    <ligand>
        <name>NAD(+)</name>
        <dbReference type="ChEBI" id="CHEBI:57540"/>
    </ligand>
</feature>
<feature type="modified residue" description="Phosphoserine" evidence="13">
    <location>
        <position position="154"/>
    </location>
</feature>
<feature type="modified residue" description="N6-succinyllysine" evidence="2">
    <location>
        <position position="289"/>
    </location>
</feature>
<feature type="modified residue" description="Phosphotyrosine" evidence="1">
    <location>
        <position position="326"/>
    </location>
</feature>
<feature type="splice variant" id="VSP_045999" description="In isoform 2." evidence="7">
    <location>
        <begin position="74"/>
        <end position="96"/>
    </location>
</feature>
<feature type="sequence variant" id="VAR_029492" description="In dbSNP:rs2232202." evidence="4">
    <original>I</original>
    <variation>V</variation>
    <location>
        <position position="54"/>
    </location>
</feature>
<feature type="sequence variant" id="VAR_029493" description="In dbSNP:rs1128867." evidence="6">
    <original>A</original>
    <variation>P</variation>
    <location>
        <position position="113"/>
    </location>
</feature>
<feature type="sequence variant" id="VAR_067425" description="In dbSNP:rs34783513." evidence="4">
    <original>E</original>
    <variation>K</variation>
    <location>
        <position position="124"/>
    </location>
</feature>
<feature type="sequence variant" id="VAR_049220" description="In dbSNP:rs2232207." evidence="4">
    <original>V</original>
    <variation>A</variation>
    <location>
        <position position="197"/>
    </location>
</feature>
<feature type="sequence variant" id="VAR_067426" description="In dbSNP:rs200251017." evidence="4">
    <original>T</original>
    <variation>I</variation>
    <location>
        <position position="223"/>
    </location>
</feature>
<feature type="sequence variant" id="VAR_071967" description="In HTGTI; dbSNP:rs199673455." evidence="5">
    <original>R</original>
    <variation>P</variation>
    <location>
        <position position="229"/>
    </location>
</feature>
<feature type="strand" evidence="15">
    <location>
        <begin position="4"/>
        <end position="9"/>
    </location>
</feature>
<feature type="helix" evidence="15">
    <location>
        <begin position="13"/>
        <end position="28"/>
    </location>
</feature>
<feature type="strand" evidence="15">
    <location>
        <begin position="32"/>
        <end position="39"/>
    </location>
</feature>
<feature type="strand" evidence="14">
    <location>
        <begin position="44"/>
        <end position="49"/>
    </location>
</feature>
<feature type="helix" evidence="15">
    <location>
        <begin position="51"/>
        <end position="57"/>
    </location>
</feature>
<feature type="turn" evidence="15">
    <location>
        <begin position="61"/>
        <end position="63"/>
    </location>
</feature>
<feature type="strand" evidence="15">
    <location>
        <begin position="73"/>
        <end position="78"/>
    </location>
</feature>
<feature type="helix" evidence="15">
    <location>
        <begin position="79"/>
        <end position="83"/>
    </location>
</feature>
<feature type="strand" evidence="15">
    <location>
        <begin position="87"/>
        <end position="91"/>
    </location>
</feature>
<feature type="helix" evidence="15">
    <location>
        <begin position="95"/>
        <end position="105"/>
    </location>
</feature>
<feature type="strand" evidence="15">
    <location>
        <begin position="114"/>
        <end position="117"/>
    </location>
</feature>
<feature type="strand" evidence="15">
    <location>
        <begin position="123"/>
        <end position="125"/>
    </location>
</feature>
<feature type="strand" evidence="15">
    <location>
        <begin position="128"/>
        <end position="130"/>
    </location>
</feature>
<feature type="helix" evidence="15">
    <location>
        <begin position="132"/>
        <end position="140"/>
    </location>
</feature>
<feature type="strand" evidence="15">
    <location>
        <begin position="144"/>
        <end position="148"/>
    </location>
</feature>
<feature type="helix" evidence="15">
    <location>
        <begin position="153"/>
        <end position="157"/>
    </location>
</feature>
<feature type="strand" evidence="15">
    <location>
        <begin position="162"/>
        <end position="167"/>
    </location>
</feature>
<feature type="helix" evidence="15">
    <location>
        <begin position="171"/>
        <end position="181"/>
    </location>
</feature>
<feature type="strand" evidence="15">
    <location>
        <begin position="186"/>
        <end position="192"/>
    </location>
</feature>
<feature type="helix" evidence="15">
    <location>
        <begin position="194"/>
        <end position="216"/>
    </location>
</feature>
<feature type="helix" evidence="15">
    <location>
        <begin position="221"/>
        <end position="242"/>
    </location>
</feature>
<feature type="strand" evidence="14">
    <location>
        <begin position="243"/>
        <end position="245"/>
    </location>
</feature>
<feature type="helix" evidence="15">
    <location>
        <begin position="249"/>
        <end position="253"/>
    </location>
</feature>
<feature type="turn" evidence="15">
    <location>
        <begin position="255"/>
        <end position="257"/>
    </location>
</feature>
<feature type="helix" evidence="15">
    <location>
        <begin position="258"/>
        <end position="266"/>
    </location>
</feature>
<feature type="helix" evidence="15">
    <location>
        <begin position="269"/>
        <end position="280"/>
    </location>
</feature>
<feature type="helix" evidence="15">
    <location>
        <begin position="284"/>
        <end position="292"/>
    </location>
</feature>
<feature type="helix" evidence="15">
    <location>
        <begin position="298"/>
        <end position="312"/>
    </location>
</feature>
<feature type="helix" evidence="15">
    <location>
        <begin position="316"/>
        <end position="318"/>
    </location>
</feature>
<feature type="helix" evidence="15">
    <location>
        <begin position="320"/>
        <end position="330"/>
    </location>
</feature>
<feature type="helix" evidence="15">
    <location>
        <begin position="335"/>
        <end position="337"/>
    </location>
</feature>
<feature type="helix" evidence="15">
    <location>
        <begin position="339"/>
        <end position="342"/>
    </location>
</feature>
<feature type="helix" evidence="15">
    <location>
        <begin position="346"/>
        <end position="348"/>
    </location>
</feature>
<reference key="1">
    <citation type="journal article" date="1995" name="Biochim. Biophys. Acta">
        <title>Molecular cloning, sequencing and expression of a cDNA encoding a human liver NAD-dependent alpha-glycerol-3-phosphate dehydrogenase.</title>
        <authorList>
            <person name="Menaya J."/>
            <person name="Gonzalez-Manchon C."/>
            <person name="Parrilla R."/>
            <person name="Ayuso M.S."/>
        </authorList>
    </citation>
    <scope>NUCLEOTIDE SEQUENCE [MRNA] (ISOFORM 1)</scope>
    <scope>VARIANT PRO-113</scope>
    <scope>CATALYTIC ACTIVITY</scope>
    <scope>FUNCTION</scope>
    <scope>BIOPHYSICOCHEMICAL PROPERTIES</scope>
    <scope>SUBCELLULAR LOCATION</scope>
    <scope>TISSUE SPECIFICITY</scope>
    <source>
        <tissue>Liver</tissue>
    </source>
</reference>
<reference key="2">
    <citation type="journal article" date="2004" name="Nat. Genet.">
        <title>Complete sequencing and characterization of 21,243 full-length human cDNAs.</title>
        <authorList>
            <person name="Ota T."/>
            <person name="Suzuki Y."/>
            <person name="Nishikawa T."/>
            <person name="Otsuki T."/>
            <person name="Sugiyama T."/>
            <person name="Irie R."/>
            <person name="Wakamatsu A."/>
            <person name="Hayashi K."/>
            <person name="Sato H."/>
            <person name="Nagai K."/>
            <person name="Kimura K."/>
            <person name="Makita H."/>
            <person name="Sekine M."/>
            <person name="Obayashi M."/>
            <person name="Nishi T."/>
            <person name="Shibahara T."/>
            <person name="Tanaka T."/>
            <person name="Ishii S."/>
            <person name="Yamamoto J."/>
            <person name="Saito K."/>
            <person name="Kawai Y."/>
            <person name="Isono Y."/>
            <person name="Nakamura Y."/>
            <person name="Nagahari K."/>
            <person name="Murakami K."/>
            <person name="Yasuda T."/>
            <person name="Iwayanagi T."/>
            <person name="Wagatsuma M."/>
            <person name="Shiratori A."/>
            <person name="Sudo H."/>
            <person name="Hosoiri T."/>
            <person name="Kaku Y."/>
            <person name="Kodaira H."/>
            <person name="Kondo H."/>
            <person name="Sugawara M."/>
            <person name="Takahashi M."/>
            <person name="Kanda K."/>
            <person name="Yokoi T."/>
            <person name="Furuya T."/>
            <person name="Kikkawa E."/>
            <person name="Omura Y."/>
            <person name="Abe K."/>
            <person name="Kamihara K."/>
            <person name="Katsuta N."/>
            <person name="Sato K."/>
            <person name="Tanikawa M."/>
            <person name="Yamazaki M."/>
            <person name="Ninomiya K."/>
            <person name="Ishibashi T."/>
            <person name="Yamashita H."/>
            <person name="Murakawa K."/>
            <person name="Fujimori K."/>
            <person name="Tanai H."/>
            <person name="Kimata M."/>
            <person name="Watanabe M."/>
            <person name="Hiraoka S."/>
            <person name="Chiba Y."/>
            <person name="Ishida S."/>
            <person name="Ono Y."/>
            <person name="Takiguchi S."/>
            <person name="Watanabe S."/>
            <person name="Yosida M."/>
            <person name="Hotuta T."/>
            <person name="Kusano J."/>
            <person name="Kanehori K."/>
            <person name="Takahashi-Fujii A."/>
            <person name="Hara H."/>
            <person name="Tanase T.-O."/>
            <person name="Nomura Y."/>
            <person name="Togiya S."/>
            <person name="Komai F."/>
            <person name="Hara R."/>
            <person name="Takeuchi K."/>
            <person name="Arita M."/>
            <person name="Imose N."/>
            <person name="Musashino K."/>
            <person name="Yuuki H."/>
            <person name="Oshima A."/>
            <person name="Sasaki N."/>
            <person name="Aotsuka S."/>
            <person name="Yoshikawa Y."/>
            <person name="Matsunawa H."/>
            <person name="Ichihara T."/>
            <person name="Shiohata N."/>
            <person name="Sano S."/>
            <person name="Moriya S."/>
            <person name="Momiyama H."/>
            <person name="Satoh N."/>
            <person name="Takami S."/>
            <person name="Terashima Y."/>
            <person name="Suzuki O."/>
            <person name="Nakagawa S."/>
            <person name="Senoh A."/>
            <person name="Mizoguchi H."/>
            <person name="Goto Y."/>
            <person name="Shimizu F."/>
            <person name="Wakebe H."/>
            <person name="Hishigaki H."/>
            <person name="Watanabe T."/>
            <person name="Sugiyama A."/>
            <person name="Takemoto M."/>
            <person name="Kawakami B."/>
            <person name="Yamazaki M."/>
            <person name="Watanabe K."/>
            <person name="Kumagai A."/>
            <person name="Itakura S."/>
            <person name="Fukuzumi Y."/>
            <person name="Fujimori Y."/>
            <person name="Komiyama M."/>
            <person name="Tashiro H."/>
            <person name="Tanigami A."/>
            <person name="Fujiwara T."/>
            <person name="Ono T."/>
            <person name="Yamada K."/>
            <person name="Fujii Y."/>
            <person name="Ozaki K."/>
            <person name="Hirao M."/>
            <person name="Ohmori Y."/>
            <person name="Kawabata A."/>
            <person name="Hikiji T."/>
            <person name="Kobatake N."/>
            <person name="Inagaki H."/>
            <person name="Ikema Y."/>
            <person name="Okamoto S."/>
            <person name="Okitani R."/>
            <person name="Kawakami T."/>
            <person name="Noguchi S."/>
            <person name="Itoh T."/>
            <person name="Shigeta K."/>
            <person name="Senba T."/>
            <person name="Matsumura K."/>
            <person name="Nakajima Y."/>
            <person name="Mizuno T."/>
            <person name="Morinaga M."/>
            <person name="Sasaki M."/>
            <person name="Togashi T."/>
            <person name="Oyama M."/>
            <person name="Hata H."/>
            <person name="Watanabe M."/>
            <person name="Komatsu T."/>
            <person name="Mizushima-Sugano J."/>
            <person name="Satoh T."/>
            <person name="Shirai Y."/>
            <person name="Takahashi Y."/>
            <person name="Nakagawa K."/>
            <person name="Okumura K."/>
            <person name="Nagase T."/>
            <person name="Nomura N."/>
            <person name="Kikuchi H."/>
            <person name="Masuho Y."/>
            <person name="Yamashita R."/>
            <person name="Nakai K."/>
            <person name="Yada T."/>
            <person name="Nakamura Y."/>
            <person name="Ohara O."/>
            <person name="Isogai T."/>
            <person name="Sugano S."/>
        </authorList>
    </citation>
    <scope>NUCLEOTIDE SEQUENCE [LARGE SCALE MRNA] (ISOFORM 2)</scope>
    <source>
        <tissue>Macrophage</tissue>
    </source>
</reference>
<reference key="3">
    <citation type="journal article" date="2006" name="Nature">
        <title>The finished DNA sequence of human chromosome 12.</title>
        <authorList>
            <person name="Scherer S.E."/>
            <person name="Muzny D.M."/>
            <person name="Buhay C.J."/>
            <person name="Chen R."/>
            <person name="Cree A."/>
            <person name="Ding Y."/>
            <person name="Dugan-Rocha S."/>
            <person name="Gill R."/>
            <person name="Gunaratne P."/>
            <person name="Harris R.A."/>
            <person name="Hawes A.C."/>
            <person name="Hernandez J."/>
            <person name="Hodgson A.V."/>
            <person name="Hume J."/>
            <person name="Jackson A."/>
            <person name="Khan Z.M."/>
            <person name="Kovar-Smith C."/>
            <person name="Lewis L.R."/>
            <person name="Lozado R.J."/>
            <person name="Metzker M.L."/>
            <person name="Milosavljevic A."/>
            <person name="Miner G.R."/>
            <person name="Montgomery K.T."/>
            <person name="Morgan M.B."/>
            <person name="Nazareth L.V."/>
            <person name="Scott G."/>
            <person name="Sodergren E."/>
            <person name="Song X.-Z."/>
            <person name="Steffen D."/>
            <person name="Lovering R.C."/>
            <person name="Wheeler D.A."/>
            <person name="Worley K.C."/>
            <person name="Yuan Y."/>
            <person name="Zhang Z."/>
            <person name="Adams C.Q."/>
            <person name="Ansari-Lari M.A."/>
            <person name="Ayele M."/>
            <person name="Brown M.J."/>
            <person name="Chen G."/>
            <person name="Chen Z."/>
            <person name="Clerc-Blankenburg K.P."/>
            <person name="Davis C."/>
            <person name="Delgado O."/>
            <person name="Dinh H.H."/>
            <person name="Draper H."/>
            <person name="Gonzalez-Garay M.L."/>
            <person name="Havlak P."/>
            <person name="Jackson L.R."/>
            <person name="Jacob L.S."/>
            <person name="Kelly S.H."/>
            <person name="Li L."/>
            <person name="Li Z."/>
            <person name="Liu J."/>
            <person name="Liu W."/>
            <person name="Lu J."/>
            <person name="Maheshwari M."/>
            <person name="Nguyen B.-V."/>
            <person name="Okwuonu G.O."/>
            <person name="Pasternak S."/>
            <person name="Perez L.M."/>
            <person name="Plopper F.J.H."/>
            <person name="Santibanez J."/>
            <person name="Shen H."/>
            <person name="Tabor P.E."/>
            <person name="Verduzco D."/>
            <person name="Waldron L."/>
            <person name="Wang Q."/>
            <person name="Williams G.A."/>
            <person name="Zhang J."/>
            <person name="Zhou J."/>
            <person name="Allen C.C."/>
            <person name="Amin A.G."/>
            <person name="Anyalebechi V."/>
            <person name="Bailey M."/>
            <person name="Barbaria J.A."/>
            <person name="Bimage K.E."/>
            <person name="Bryant N.P."/>
            <person name="Burch P.E."/>
            <person name="Burkett C.E."/>
            <person name="Burrell K.L."/>
            <person name="Calderon E."/>
            <person name="Cardenas V."/>
            <person name="Carter K."/>
            <person name="Casias K."/>
            <person name="Cavazos I."/>
            <person name="Cavazos S.R."/>
            <person name="Ceasar H."/>
            <person name="Chacko J."/>
            <person name="Chan S.N."/>
            <person name="Chavez D."/>
            <person name="Christopoulos C."/>
            <person name="Chu J."/>
            <person name="Cockrell R."/>
            <person name="Cox C.D."/>
            <person name="Dang M."/>
            <person name="Dathorne S.R."/>
            <person name="David R."/>
            <person name="Davis C.M."/>
            <person name="Davy-Carroll L."/>
            <person name="Deshazo D.R."/>
            <person name="Donlin J.E."/>
            <person name="D'Souza L."/>
            <person name="Eaves K.A."/>
            <person name="Egan A."/>
            <person name="Emery-Cohen A.J."/>
            <person name="Escotto M."/>
            <person name="Flagg N."/>
            <person name="Forbes L.D."/>
            <person name="Gabisi A.M."/>
            <person name="Garza M."/>
            <person name="Hamilton C."/>
            <person name="Henderson N."/>
            <person name="Hernandez O."/>
            <person name="Hines S."/>
            <person name="Hogues M.E."/>
            <person name="Huang M."/>
            <person name="Idlebird D.G."/>
            <person name="Johnson R."/>
            <person name="Jolivet A."/>
            <person name="Jones S."/>
            <person name="Kagan R."/>
            <person name="King L.M."/>
            <person name="Leal B."/>
            <person name="Lebow H."/>
            <person name="Lee S."/>
            <person name="LeVan J.M."/>
            <person name="Lewis L.C."/>
            <person name="London P."/>
            <person name="Lorensuhewa L.M."/>
            <person name="Loulseged H."/>
            <person name="Lovett D.A."/>
            <person name="Lucier A."/>
            <person name="Lucier R.L."/>
            <person name="Ma J."/>
            <person name="Madu R.C."/>
            <person name="Mapua P."/>
            <person name="Martindale A.D."/>
            <person name="Martinez E."/>
            <person name="Massey E."/>
            <person name="Mawhiney S."/>
            <person name="Meador M.G."/>
            <person name="Mendez S."/>
            <person name="Mercado C."/>
            <person name="Mercado I.C."/>
            <person name="Merritt C.E."/>
            <person name="Miner Z.L."/>
            <person name="Minja E."/>
            <person name="Mitchell T."/>
            <person name="Mohabbat F."/>
            <person name="Mohabbat K."/>
            <person name="Montgomery B."/>
            <person name="Moore N."/>
            <person name="Morris S."/>
            <person name="Munidasa M."/>
            <person name="Ngo R.N."/>
            <person name="Nguyen N.B."/>
            <person name="Nickerson E."/>
            <person name="Nwaokelemeh O.O."/>
            <person name="Nwokenkwo S."/>
            <person name="Obregon M."/>
            <person name="Oguh M."/>
            <person name="Oragunye N."/>
            <person name="Oviedo R.J."/>
            <person name="Parish B.J."/>
            <person name="Parker D.N."/>
            <person name="Parrish J."/>
            <person name="Parks K.L."/>
            <person name="Paul H.A."/>
            <person name="Payton B.A."/>
            <person name="Perez A."/>
            <person name="Perrin W."/>
            <person name="Pickens A."/>
            <person name="Primus E.L."/>
            <person name="Pu L.-L."/>
            <person name="Puazo M."/>
            <person name="Quiles M.M."/>
            <person name="Quiroz J.B."/>
            <person name="Rabata D."/>
            <person name="Reeves K."/>
            <person name="Ruiz S.J."/>
            <person name="Shao H."/>
            <person name="Sisson I."/>
            <person name="Sonaike T."/>
            <person name="Sorelle R.P."/>
            <person name="Sutton A.E."/>
            <person name="Svatek A.F."/>
            <person name="Svetz L.A."/>
            <person name="Tamerisa K.S."/>
            <person name="Taylor T.R."/>
            <person name="Teague B."/>
            <person name="Thomas N."/>
            <person name="Thorn R.D."/>
            <person name="Trejos Z.Y."/>
            <person name="Trevino B.K."/>
            <person name="Ukegbu O.N."/>
            <person name="Urban J.B."/>
            <person name="Vasquez L.I."/>
            <person name="Vera V.A."/>
            <person name="Villasana D.M."/>
            <person name="Wang L."/>
            <person name="Ward-Moore S."/>
            <person name="Warren J.T."/>
            <person name="Wei X."/>
            <person name="White F."/>
            <person name="Williamson A.L."/>
            <person name="Wleczyk R."/>
            <person name="Wooden H.S."/>
            <person name="Wooden S.H."/>
            <person name="Yen J."/>
            <person name="Yoon L."/>
            <person name="Yoon V."/>
            <person name="Zorrilla S.E."/>
            <person name="Nelson D."/>
            <person name="Kucherlapati R."/>
            <person name="Weinstock G."/>
            <person name="Gibbs R.A."/>
        </authorList>
    </citation>
    <scope>NUCLEOTIDE SEQUENCE [LARGE SCALE GENOMIC DNA]</scope>
</reference>
<reference key="4">
    <citation type="journal article" date="2004" name="Genome Res.">
        <title>The status, quality, and expansion of the NIH full-length cDNA project: the Mammalian Gene Collection (MGC).</title>
        <authorList>
            <consortium name="The MGC Project Team"/>
        </authorList>
    </citation>
    <scope>NUCLEOTIDE SEQUENCE [LARGE SCALE MRNA] (ISOFORM 1)</scope>
    <source>
        <tissue>Pancreas</tissue>
    </source>
</reference>
<reference key="5">
    <citation type="journal article" date="1990" name="Mol. Cell. Biol.">
        <title>Sequence conservation and structural organization of the glycerol-3-phosphate dehydrogenase promoter in mice and humans.</title>
        <authorList>
            <person name="Gwynn B."/>
            <person name="Lyford K.L."/>
            <person name="Birkenmeier E.H."/>
        </authorList>
    </citation>
    <scope>NUCLEOTIDE SEQUENCE [GENOMIC DNA] OF 1-14</scope>
    <source>
        <tissue>Fetal liver</tissue>
    </source>
</reference>
<reference key="6">
    <citation type="journal article" date="2011" name="BMC Syst. Biol.">
        <title>Initial characterization of the human central proteome.</title>
        <authorList>
            <person name="Burkard T.R."/>
            <person name="Planyavsky M."/>
            <person name="Kaupe I."/>
            <person name="Breitwieser F.P."/>
            <person name="Buerckstuemmer T."/>
            <person name="Bennett K.L."/>
            <person name="Superti-Furga G."/>
            <person name="Colinge J."/>
        </authorList>
    </citation>
    <scope>IDENTIFICATION BY MASS SPECTROMETRY [LARGE SCALE ANALYSIS]</scope>
</reference>
<reference key="7">
    <citation type="journal article" date="2012" name="Am. J. Hum. Genet.">
        <title>Transient infantile hypertriglyceridemia, fatty liver, and hepatic fibrosis caused by mutated GPD1, encoding glycerol-3-phosphate dehydrogenase 1.</title>
        <authorList>
            <person name="Basel-Vanagaite L."/>
            <person name="Zevit N."/>
            <person name="Zahav A.H."/>
            <person name="Guo L."/>
            <person name="Parathath S."/>
            <person name="Pasmanik-Chor M."/>
            <person name="McIntyre A.D."/>
            <person name="Wang J."/>
            <person name="Albin-Kaplanski A."/>
            <person name="Hartman C."/>
            <person name="Marom D."/>
            <person name="Zeharia A."/>
            <person name="Badir A."/>
            <person name="Shoerman O."/>
            <person name="Simon A.J."/>
            <person name="Rechavi G."/>
            <person name="Shohat M."/>
            <person name="Hegele R.A."/>
            <person name="Fisher E.A."/>
            <person name="Shamir R."/>
        </authorList>
    </citation>
    <scope>INVOLVEMENT IN HTGTI</scope>
    <scope>VARIANTS VAL-54; LYS-124; ALA-197 AND ILE-223</scope>
</reference>
<reference key="8">
    <citation type="journal article" date="2014" name="J. Proteomics">
        <title>An enzyme assisted RP-RPLC approach for in-depth analysis of human liver phosphoproteome.</title>
        <authorList>
            <person name="Bian Y."/>
            <person name="Song C."/>
            <person name="Cheng K."/>
            <person name="Dong M."/>
            <person name="Wang F."/>
            <person name="Huang J."/>
            <person name="Sun D."/>
            <person name="Wang L."/>
            <person name="Ye M."/>
            <person name="Zou H."/>
        </authorList>
    </citation>
    <scope>PHOSPHORYLATION [LARGE SCALE ANALYSIS] AT SER-154</scope>
    <scope>IDENTIFICATION BY MASS SPECTROMETRY [LARGE SCALE ANALYSIS]</scope>
    <source>
        <tissue>Liver</tissue>
    </source>
</reference>
<reference evidence="11 12" key="9">
    <citation type="journal article" date="2006" name="J. Mol. Biol.">
        <title>Crystal structures of human glycerol 3-phosphate dehydrogenase 1 (GPD1).</title>
        <authorList>
            <person name="Ou X."/>
            <person name="Ji C."/>
            <person name="Han X."/>
            <person name="Zhao X."/>
            <person name="Li X."/>
            <person name="Mao Y."/>
            <person name="Wong L.-L."/>
            <person name="Bartlam M."/>
            <person name="Rao Z."/>
        </authorList>
    </citation>
    <scope>X-RAY CRYSTALLOGRAPHY (2.3 ANGSTROMS) IN COMPLEX WITH NAD</scope>
    <scope>SUBUNIT</scope>
    <scope>ACTIVITY REGULATION</scope>
</reference>
<reference key="10">
    <citation type="journal article" date="2014" name="Eur. J. Hum. Genet.">
        <title>A compound heterozygous mutation in GPD1 causes hepatomegaly, steatohepatitis, and hypertriglyceridemia.</title>
        <authorList>
            <person name="Joshi M."/>
            <person name="Eagan J."/>
            <person name="Desai N.K."/>
            <person name="Newton S.A."/>
            <person name="Towne M.C."/>
            <person name="Marinakis N.S."/>
            <person name="Esteves K.M."/>
            <person name="De Ferranti S."/>
            <person name="Bennett M.J."/>
            <person name="McIntyre A."/>
            <person name="Beggs A.H."/>
            <person name="Berry G.T."/>
            <person name="Agrawal P.B."/>
        </authorList>
    </citation>
    <scope>VARIANT HTGTI PRO-229</scope>
</reference>
<accession>P21695</accession>
<accession>F8W1L5</accession>
<accession>Q8N1B0</accession>
<protein>
    <recommendedName>
        <fullName evidence="8">Glycerol-3-phosphate dehydrogenase [NAD(+)], cytoplasmic</fullName>
        <shortName>GPD-C</shortName>
        <shortName>GPDH-C</shortName>
        <ecNumber evidence="6">1.1.1.8</ecNumber>
    </recommendedName>
</protein>
<comment type="function">
    <text evidence="6">Has glycerol-3-phosphate dehydrogenase activity.</text>
</comment>
<comment type="catalytic activity">
    <reaction evidence="6">
        <text>sn-glycerol 3-phosphate + NAD(+) = dihydroxyacetone phosphate + NADH + H(+)</text>
        <dbReference type="Rhea" id="RHEA:11092"/>
        <dbReference type="ChEBI" id="CHEBI:15378"/>
        <dbReference type="ChEBI" id="CHEBI:57540"/>
        <dbReference type="ChEBI" id="CHEBI:57597"/>
        <dbReference type="ChEBI" id="CHEBI:57642"/>
        <dbReference type="ChEBI" id="CHEBI:57945"/>
        <dbReference type="EC" id="1.1.1.8"/>
    </reaction>
    <physiologicalReaction direction="left-to-right" evidence="9">
        <dbReference type="Rhea" id="RHEA:11093"/>
    </physiologicalReaction>
</comment>
<comment type="activity regulation">
    <text evidence="3">Inhibited by zinc ions and sulfate.</text>
</comment>
<comment type="biophysicochemical properties">
    <kinetics>
        <KM evidence="6">92 uM for glycerol 3-phosphate</KM>
        <KM evidence="6">140 uM for NAD</KM>
        <KM evidence="6">1070 mM for NADP</KM>
    </kinetics>
</comment>
<comment type="subunit">
    <text evidence="3">Homodimer.</text>
</comment>
<comment type="interaction">
    <interactant intactId="EBI-713346">
        <id>P21695</id>
    </interactant>
    <interactant intactId="EBI-14240149">
        <id>B3EWG3</id>
        <label>FAM25A</label>
    </interactant>
    <organismsDiffer>false</organismsDiffer>
    <experiments>3</experiments>
</comment>
<comment type="subcellular location">
    <subcellularLocation>
        <location evidence="6">Cytoplasm</location>
    </subcellularLocation>
</comment>
<comment type="alternative products">
    <event type="alternative splicing"/>
    <isoform>
        <id>P21695-1</id>
        <name>1</name>
        <sequence type="displayed"/>
    </isoform>
    <isoform>
        <id>P21695-2</id>
        <name>2</name>
        <sequence type="described" ref="VSP_045999"/>
    </isoform>
</comment>
<comment type="tissue specificity">
    <text evidence="6">Expressed in liver (at protein level).</text>
</comment>
<comment type="disease" evidence="4 5">
    <disease id="DI-03387">
        <name>Hypertriglyceridemia, transient infantile</name>
        <acronym>HTGTI</acronym>
        <description>An autosomal recessive disorder characterized by onset of moderate to severe transient hypertriglyceridemia in infancy that normalizes with age. The hypertriglyceridemia is associated with hepatomegaly, moderately elevated transaminases, persistent fatty liver, and the development of hepatic fibrosis.</description>
        <dbReference type="MIM" id="614480"/>
    </disease>
    <text>The disease is caused by variants affecting the gene represented in this entry.</text>
</comment>
<comment type="similarity">
    <text evidence="8">Belongs to the NAD-dependent glycerol-3-phosphate dehydrogenase family.</text>
</comment>
<proteinExistence type="evidence at protein level"/>
<keyword id="KW-0002">3D-structure</keyword>
<keyword id="KW-0025">Alternative splicing</keyword>
<keyword id="KW-0963">Cytoplasm</keyword>
<keyword id="KW-0225">Disease variant</keyword>
<keyword id="KW-0520">NAD</keyword>
<keyword id="KW-0560">Oxidoreductase</keyword>
<keyword id="KW-0597">Phosphoprotein</keyword>
<keyword id="KW-1267">Proteomics identification</keyword>
<keyword id="KW-1185">Reference proteome</keyword>